<comment type="function">
    <text evidence="1">ATP-dependent specificity component of the Clp protease. It directs the protease to specific substrates. Can perform chaperone functions in the absence of ClpP.</text>
</comment>
<comment type="subunit">
    <text evidence="1">Component of the ClpX-ClpP complex. Forms a hexameric ring that, in the presence of ATP, binds to fourteen ClpP subunits assembled into a disk-like structure with a central cavity, resembling the structure of eukaryotic proteasomes.</text>
</comment>
<comment type="similarity">
    <text evidence="1">Belongs to the ClpX chaperone family.</text>
</comment>
<reference key="1">
    <citation type="journal article" date="2000" name="Nature">
        <title>Complete DNA sequence of a serogroup A strain of Neisseria meningitidis Z2491.</title>
        <authorList>
            <person name="Parkhill J."/>
            <person name="Achtman M."/>
            <person name="James K.D."/>
            <person name="Bentley S.D."/>
            <person name="Churcher C.M."/>
            <person name="Klee S.R."/>
            <person name="Morelli G."/>
            <person name="Basham D."/>
            <person name="Brown D."/>
            <person name="Chillingworth T."/>
            <person name="Davies R.M."/>
            <person name="Davis P."/>
            <person name="Devlin K."/>
            <person name="Feltwell T."/>
            <person name="Hamlin N."/>
            <person name="Holroyd S."/>
            <person name="Jagels K."/>
            <person name="Leather S."/>
            <person name="Moule S."/>
            <person name="Mungall K.L."/>
            <person name="Quail M.A."/>
            <person name="Rajandream M.A."/>
            <person name="Rutherford K.M."/>
            <person name="Simmonds M."/>
            <person name="Skelton J."/>
            <person name="Whitehead S."/>
            <person name="Spratt B.G."/>
            <person name="Barrell B.G."/>
        </authorList>
    </citation>
    <scope>NUCLEOTIDE SEQUENCE [LARGE SCALE GENOMIC DNA]</scope>
    <source>
        <strain>DSM 15465 / Z2491</strain>
    </source>
</reference>
<sequence length="414" mass="45199">MSNENRTCSFCGKSKSHVKHLIEGENAFICDECVSNCIEILHEDGNDGTPSESAGGEPEESGKLPTPAEIVANLNDHVIGQEQAKKALAVSVYNHYKRLRHPKARANVELSKSNILLIGPTGSGKTLLAQSLARKLDVPFVMADATTLTEAGYVGEDVEQIITKLLGKCDFDVEKAQRGIVYIDEIDKISRKSDNPSITRDVSGEGVQQALLKLIEGTVASVPPQGGRKHPNQEFINVDTTNILFICGGAFAGLEKVIRQRTEKGGIGFGASVHSKDENADITKLFGIVEPEDLIKFGLIPELIGRLPVIATLEELDEDALINILTEPKNALVKQYQALFGMENVELEFEEGALRSIARQAMERKTGARGLRSIVERCLLDTMYRLPDLQGLKKVVVGKAVIEEGREPELVFES</sequence>
<gene>
    <name evidence="1" type="primary">clpX</name>
    <name type="ordered locus">NMA1585</name>
</gene>
<evidence type="ECO:0000255" key="1">
    <source>
        <dbReference type="HAMAP-Rule" id="MF_00175"/>
    </source>
</evidence>
<evidence type="ECO:0000255" key="2">
    <source>
        <dbReference type="PROSITE-ProRule" id="PRU01250"/>
    </source>
</evidence>
<evidence type="ECO:0000256" key="3">
    <source>
        <dbReference type="SAM" id="MobiDB-lite"/>
    </source>
</evidence>
<accession>Q9JTX8</accession>
<accession>A1ISH3</accession>
<protein>
    <recommendedName>
        <fullName evidence="1">ATP-dependent Clp protease ATP-binding subunit ClpX</fullName>
    </recommendedName>
</protein>
<feature type="chain" id="PRO_0000160390" description="ATP-dependent Clp protease ATP-binding subunit ClpX">
    <location>
        <begin position="1"/>
        <end position="414"/>
    </location>
</feature>
<feature type="domain" description="ClpX-type ZB" evidence="2">
    <location>
        <begin position="1"/>
        <end position="49"/>
    </location>
</feature>
<feature type="region of interest" description="Disordered" evidence="3">
    <location>
        <begin position="44"/>
        <end position="65"/>
    </location>
</feature>
<feature type="binding site" evidence="2">
    <location>
        <position position="8"/>
    </location>
    <ligand>
        <name>Zn(2+)</name>
        <dbReference type="ChEBI" id="CHEBI:29105"/>
    </ligand>
</feature>
<feature type="binding site" evidence="2">
    <location>
        <position position="11"/>
    </location>
    <ligand>
        <name>Zn(2+)</name>
        <dbReference type="ChEBI" id="CHEBI:29105"/>
    </ligand>
</feature>
<feature type="binding site" evidence="2">
    <location>
        <position position="30"/>
    </location>
    <ligand>
        <name>Zn(2+)</name>
        <dbReference type="ChEBI" id="CHEBI:29105"/>
    </ligand>
</feature>
<feature type="binding site" evidence="2">
    <location>
        <position position="33"/>
    </location>
    <ligand>
        <name>Zn(2+)</name>
        <dbReference type="ChEBI" id="CHEBI:29105"/>
    </ligand>
</feature>
<feature type="binding site" evidence="1">
    <location>
        <begin position="120"/>
        <end position="127"/>
    </location>
    <ligand>
        <name>ATP</name>
        <dbReference type="ChEBI" id="CHEBI:30616"/>
    </ligand>
</feature>
<organism>
    <name type="scientific">Neisseria meningitidis serogroup A / serotype 4A (strain DSM 15465 / Z2491)</name>
    <dbReference type="NCBI Taxonomy" id="122587"/>
    <lineage>
        <taxon>Bacteria</taxon>
        <taxon>Pseudomonadati</taxon>
        <taxon>Pseudomonadota</taxon>
        <taxon>Betaproteobacteria</taxon>
        <taxon>Neisseriales</taxon>
        <taxon>Neisseriaceae</taxon>
        <taxon>Neisseria</taxon>
    </lineage>
</organism>
<proteinExistence type="inferred from homology"/>
<dbReference type="EMBL" id="AL157959">
    <property type="protein sequence ID" value="CAM08729.1"/>
    <property type="molecule type" value="Genomic_DNA"/>
</dbReference>
<dbReference type="PIR" id="D81851">
    <property type="entry name" value="D81851"/>
</dbReference>
<dbReference type="RefSeq" id="WP_002246949.1">
    <property type="nucleotide sequence ID" value="NC_003116.1"/>
</dbReference>
<dbReference type="SMR" id="Q9JTX8"/>
<dbReference type="EnsemblBacteria" id="CAM08729">
    <property type="protein sequence ID" value="CAM08729"/>
    <property type="gene ID" value="NMA1585"/>
</dbReference>
<dbReference type="KEGG" id="nma:NMA1585"/>
<dbReference type="HOGENOM" id="CLU_014218_8_2_4"/>
<dbReference type="Proteomes" id="UP000000626">
    <property type="component" value="Chromosome"/>
</dbReference>
<dbReference type="GO" id="GO:0009376">
    <property type="term" value="C:HslUV protease complex"/>
    <property type="evidence" value="ECO:0007669"/>
    <property type="project" value="TreeGrafter"/>
</dbReference>
<dbReference type="GO" id="GO:0005524">
    <property type="term" value="F:ATP binding"/>
    <property type="evidence" value="ECO:0007669"/>
    <property type="project" value="UniProtKB-UniRule"/>
</dbReference>
<dbReference type="GO" id="GO:0016887">
    <property type="term" value="F:ATP hydrolysis activity"/>
    <property type="evidence" value="ECO:0007669"/>
    <property type="project" value="InterPro"/>
</dbReference>
<dbReference type="GO" id="GO:0140662">
    <property type="term" value="F:ATP-dependent protein folding chaperone"/>
    <property type="evidence" value="ECO:0007669"/>
    <property type="project" value="InterPro"/>
</dbReference>
<dbReference type="GO" id="GO:0046983">
    <property type="term" value="F:protein dimerization activity"/>
    <property type="evidence" value="ECO:0007669"/>
    <property type="project" value="InterPro"/>
</dbReference>
<dbReference type="GO" id="GO:0051082">
    <property type="term" value="F:unfolded protein binding"/>
    <property type="evidence" value="ECO:0007669"/>
    <property type="project" value="UniProtKB-UniRule"/>
</dbReference>
<dbReference type="GO" id="GO:0008270">
    <property type="term" value="F:zinc ion binding"/>
    <property type="evidence" value="ECO:0007669"/>
    <property type="project" value="InterPro"/>
</dbReference>
<dbReference type="GO" id="GO:0051301">
    <property type="term" value="P:cell division"/>
    <property type="evidence" value="ECO:0007669"/>
    <property type="project" value="TreeGrafter"/>
</dbReference>
<dbReference type="GO" id="GO:0051603">
    <property type="term" value="P:proteolysis involved in protein catabolic process"/>
    <property type="evidence" value="ECO:0007669"/>
    <property type="project" value="TreeGrafter"/>
</dbReference>
<dbReference type="CDD" id="cd19497">
    <property type="entry name" value="RecA-like_ClpX"/>
    <property type="match status" value="1"/>
</dbReference>
<dbReference type="FunFam" id="1.10.8.60:FF:000002">
    <property type="entry name" value="ATP-dependent Clp protease ATP-binding subunit ClpX"/>
    <property type="match status" value="1"/>
</dbReference>
<dbReference type="FunFam" id="3.40.50.300:FF:000005">
    <property type="entry name" value="ATP-dependent Clp protease ATP-binding subunit ClpX"/>
    <property type="match status" value="1"/>
</dbReference>
<dbReference type="Gene3D" id="1.10.8.60">
    <property type="match status" value="1"/>
</dbReference>
<dbReference type="Gene3D" id="6.20.220.10">
    <property type="entry name" value="ClpX chaperone, C4-type zinc finger domain"/>
    <property type="match status" value="1"/>
</dbReference>
<dbReference type="Gene3D" id="3.40.50.300">
    <property type="entry name" value="P-loop containing nucleotide triphosphate hydrolases"/>
    <property type="match status" value="1"/>
</dbReference>
<dbReference type="HAMAP" id="MF_00175">
    <property type="entry name" value="ClpX"/>
    <property type="match status" value="1"/>
</dbReference>
<dbReference type="InterPro" id="IPR003593">
    <property type="entry name" value="AAA+_ATPase"/>
</dbReference>
<dbReference type="InterPro" id="IPR050052">
    <property type="entry name" value="ATP-dep_Clp_protease_ClpX"/>
</dbReference>
<dbReference type="InterPro" id="IPR003959">
    <property type="entry name" value="ATPase_AAA_core"/>
</dbReference>
<dbReference type="InterPro" id="IPR019489">
    <property type="entry name" value="Clp_ATPase_C"/>
</dbReference>
<dbReference type="InterPro" id="IPR004487">
    <property type="entry name" value="Clp_protease_ATP-bd_su_ClpX"/>
</dbReference>
<dbReference type="InterPro" id="IPR046425">
    <property type="entry name" value="ClpX_bact"/>
</dbReference>
<dbReference type="InterPro" id="IPR027417">
    <property type="entry name" value="P-loop_NTPase"/>
</dbReference>
<dbReference type="InterPro" id="IPR010603">
    <property type="entry name" value="Znf_CppX_C4"/>
</dbReference>
<dbReference type="InterPro" id="IPR038366">
    <property type="entry name" value="Znf_CppX_C4_sf"/>
</dbReference>
<dbReference type="NCBIfam" id="TIGR00382">
    <property type="entry name" value="clpX"/>
    <property type="match status" value="1"/>
</dbReference>
<dbReference type="NCBIfam" id="NF003745">
    <property type="entry name" value="PRK05342.1"/>
    <property type="match status" value="1"/>
</dbReference>
<dbReference type="PANTHER" id="PTHR48102:SF7">
    <property type="entry name" value="ATP-DEPENDENT CLP PROTEASE ATP-BINDING SUBUNIT CLPX-LIKE, MITOCHONDRIAL"/>
    <property type="match status" value="1"/>
</dbReference>
<dbReference type="PANTHER" id="PTHR48102">
    <property type="entry name" value="ATP-DEPENDENT CLP PROTEASE ATP-BINDING SUBUNIT CLPX-LIKE, MITOCHONDRIAL-RELATED"/>
    <property type="match status" value="1"/>
</dbReference>
<dbReference type="Pfam" id="PF07724">
    <property type="entry name" value="AAA_2"/>
    <property type="match status" value="1"/>
</dbReference>
<dbReference type="Pfam" id="PF10431">
    <property type="entry name" value="ClpB_D2-small"/>
    <property type="match status" value="1"/>
</dbReference>
<dbReference type="Pfam" id="PF06689">
    <property type="entry name" value="zf-C4_ClpX"/>
    <property type="match status" value="1"/>
</dbReference>
<dbReference type="SMART" id="SM00382">
    <property type="entry name" value="AAA"/>
    <property type="match status" value="1"/>
</dbReference>
<dbReference type="SMART" id="SM01086">
    <property type="entry name" value="ClpB_D2-small"/>
    <property type="match status" value="1"/>
</dbReference>
<dbReference type="SMART" id="SM00994">
    <property type="entry name" value="zf-C4_ClpX"/>
    <property type="match status" value="1"/>
</dbReference>
<dbReference type="SUPFAM" id="SSF57716">
    <property type="entry name" value="Glucocorticoid receptor-like (DNA-binding domain)"/>
    <property type="match status" value="1"/>
</dbReference>
<dbReference type="SUPFAM" id="SSF52540">
    <property type="entry name" value="P-loop containing nucleoside triphosphate hydrolases"/>
    <property type="match status" value="1"/>
</dbReference>
<dbReference type="PROSITE" id="PS51902">
    <property type="entry name" value="CLPX_ZB"/>
    <property type="match status" value="1"/>
</dbReference>
<keyword id="KW-0067">ATP-binding</keyword>
<keyword id="KW-0143">Chaperone</keyword>
<keyword id="KW-0479">Metal-binding</keyword>
<keyword id="KW-0547">Nucleotide-binding</keyword>
<keyword id="KW-0862">Zinc</keyword>
<name>CLPX_NEIMA</name>